<comment type="function">
    <text evidence="2 11 15">Mediates transcriptional repression by certain nuclear receptors. Part of a complex which promotes histone deacetylation and the formation of repressive chromatin structures which may impede the access of basal transcription factors. Participates in the transcriptional repressor activity produced by BCL6. Recruited by ZBTB7A to the androgen response elements/ARE on target genes, negatively regulates androgen receptor signaling and androgen-induced cell proliferation (By similarity). Mediates the NR1D1-dependent repression and circadian regulation of TSHB expression (PubMed:24794873). The NCOR1-HDAC3 complex regulates the circadian expression of the core clock gene ARTNL/BMAL1 and the genes involved in lipid metabolism in the liver (PubMed:19037247).</text>
</comment>
<comment type="subunit">
    <text evidence="2 7 8 9 10 11 12 13 14 16 17 18 19 20 21">Forms a large corepressor complex that contains SIN3A/B and histone deacetylases HDAC1 and HDAC2. This complex associates with the thyroid receptor (TR) and the retinoid acid receptor (RAR) in the absence of ligand. Interacts directly with RARA; the interaction is facilitated with RARA trimethylation. Component of the N-Cor repressor complex, at least composed of CBFA2T3, HEXIM1, NCOR1, NCOR2, HDAC3, TBL1X, TBL1XR1, CORO2A and GPS2. Interacts with ZBTB33; the interaction serves to recruit the N-CoR complex to promoter regions containing methylated CpG dinucleotides. Interacts with TRIM28 and KDM3A. Interacts (via the RD1 domain) with BAZ1A (via its N-terminal); the interaction corepresses a number of NCOR1-regulated genes. Interacts with BCL6, C1D, DACH1, HEXIM1, HDAC7, RORA, RORC, SAP30, SIAH2, SIN3A and SIN3B (PubMed:10984530). May interact with DEAF1. Interacts with RXRA. Interacts with SETD5 (PubMed:27864380). Interacts with VDR (By similarity). Interacts with ZBTB7A (By similarity). Interacts with AR (By similarity). Interacts with HDAC3 (PubMed:19037247).</text>
</comment>
<comment type="interaction">
    <interactant intactId="EBI-349004">
        <id>Q60974</id>
    </interactant>
    <interactant intactId="EBI-2291098">
        <id>Q01147</id>
        <label>Creb1</label>
    </interactant>
    <organismsDiffer>false</organismsDiffer>
    <experiments>4</experiments>
</comment>
<comment type="interaction">
    <interactant intactId="EBI-349004">
        <id>Q60974</id>
    </interactant>
    <interactant intactId="EBI-348961">
        <id>Q9QYB2</id>
        <label>Dach1</label>
    </interactant>
    <organismsDiffer>false</organismsDiffer>
    <experiments>2</experiments>
</comment>
<comment type="interaction">
    <interactant intactId="EBI-349004">
        <id>Q60974</id>
    </interactant>
    <interactant intactId="EBI-593511">
        <id>O88574</id>
        <label>Sap30</label>
    </interactant>
    <organismsDiffer>false</organismsDiffer>
    <experiments>3</experiments>
</comment>
<comment type="interaction">
    <interactant intactId="EBI-349004">
        <id>Q60974</id>
    </interactant>
    <interactant intactId="EBI-1802585">
        <id>Q923E4</id>
        <label>Sirt1</label>
    </interactant>
    <organismsDiffer>false</organismsDiffer>
    <experiments>3</experiments>
</comment>
<comment type="interaction">
    <interactant intactId="EBI-349004">
        <id>Q60974</id>
    </interactant>
    <interactant intactId="EBI-78473">
        <id>P03372</id>
        <label>ESR1</label>
    </interactant>
    <organismsDiffer>true</organismsDiffer>
    <experiments>2</experiments>
</comment>
<comment type="interaction">
    <interactant intactId="EBI-349004">
        <id>Q60974</id>
    </interactant>
    <interactant intactId="EBI-78505">
        <id>Q92731</id>
        <label>ESR2</label>
    </interactant>
    <organismsDiffer>true</organismsDiffer>
    <experiments>6</experiments>
</comment>
<comment type="interaction">
    <interactant intactId="EBI-349004">
        <id>Q60974</id>
    </interactant>
    <interactant intactId="EBI-607682">
        <id>O15379</id>
        <label>HDAC3</label>
    </interactant>
    <organismsDiffer>true</organismsDiffer>
    <experiments>2</experiments>
</comment>
<comment type="interaction">
    <interactant intactId="EBI-349004">
        <id>Q60974</id>
    </interactant>
    <interactant intactId="EBI-765476">
        <id>Q9UKV0-3</id>
        <label>HDAC9</label>
    </interactant>
    <organismsDiffer>true</organismsDiffer>
    <experiments>2</experiments>
</comment>
<comment type="interaction">
    <interactant intactId="EBI-349004">
        <id>Q60974</id>
    </interactant>
    <interactant intactId="EBI-1372717">
        <id>Q9UKV0-7</id>
        <label>HDAC9</label>
    </interactant>
    <organismsDiffer>true</organismsDiffer>
    <experiments>3</experiments>
</comment>
<comment type="interaction">
    <interactant intactId="EBI-349004">
        <id>Q60974</id>
    </interactant>
    <interactant intactId="EBI-1189067">
        <id>P51608</id>
        <label>MECP2</label>
    </interactant>
    <organismsDiffer>true</organismsDiffer>
    <experiments>4</experiments>
</comment>
<comment type="interaction">
    <interactant intactId="EBI-349004">
        <id>Q60974</id>
    </interactant>
    <interactant intactId="EBI-1802965">
        <id>Q96EB6</id>
        <label>SIRT1</label>
    </interactant>
    <organismsDiffer>true</organismsDiffer>
    <experiments>2</experiments>
</comment>
<comment type="interaction">
    <interactant intactId="EBI-349004">
        <id>Q60974</id>
    </interactant>
    <interactant intactId="EBI-347281">
        <id>P12755</id>
        <label>SKI</label>
    </interactant>
    <organismsDiffer>true</organismsDiffer>
    <experiments>5</experiments>
</comment>
<comment type="interaction">
    <interactant intactId="EBI-349004">
        <id>Q60974</id>
    </interactant>
    <interactant intactId="EBI-2902468">
        <id>P12757</id>
        <label>SKIL</label>
    </interactant>
    <organismsDiffer>true</organismsDiffer>
    <experiments>2</experiments>
</comment>
<comment type="interaction">
    <interactant intactId="EBI-349004">
        <id>Q60974</id>
    </interactant>
    <interactant intactId="EBI-632715">
        <id>Q13573</id>
        <label>SNW1</label>
    </interactant>
    <organismsDiffer>true</organismsDiffer>
    <experiments>3</experiments>
</comment>
<comment type="interaction">
    <interactant intactId="EBI-349004">
        <id>Q60974</id>
    </interactant>
    <interactant intactId="EBI-78558">
        <id>P10828</id>
        <label>THRB</label>
    </interactant>
    <organismsDiffer>true</organismsDiffer>
    <experiments>2</experiments>
</comment>
<comment type="subcellular location">
    <subcellularLocation>
        <location>Nucleus</location>
    </subcellularLocation>
</comment>
<comment type="alternative products">
    <event type="alternative splicing"/>
    <isoform>
        <id>Q60974-1</id>
        <name>1</name>
        <sequence type="displayed"/>
    </isoform>
    <isoform>
        <id>Q60974-2</id>
        <name>2</name>
        <sequence type="described" ref="VSP_003411"/>
    </isoform>
</comment>
<comment type="tissue specificity">
    <text>Ubiquitous.</text>
</comment>
<comment type="domain">
    <text evidence="17">The N-terminal region contains three independent domains that are capable of mediating transcriptional repression (RD1, RD2 and RD3).</text>
</comment>
<comment type="domain">
    <text evidence="17">The C-terminal region contains two separate nuclear receptor-interacting domains (ID1 and ID2), each of which contains a conserved sequence referred to as the CORNR box. This motif is necessary and sufficient for binding to unligated nuclear hormone receptors, while sequences flanking the CORNR box determine the precise nuclear hormone receptor specificity.</text>
</comment>
<comment type="PTM">
    <text evidence="23">Ubiquitinated; mediated by SIAH2 and leading to its subsequent proteasomal degradation.</text>
</comment>
<comment type="similarity">
    <text evidence="23">Belongs to the N-CoR nuclear receptor corepressors family.</text>
</comment>
<organism>
    <name type="scientific">Mus musculus</name>
    <name type="common">Mouse</name>
    <dbReference type="NCBI Taxonomy" id="10090"/>
    <lineage>
        <taxon>Eukaryota</taxon>
        <taxon>Metazoa</taxon>
        <taxon>Chordata</taxon>
        <taxon>Craniata</taxon>
        <taxon>Vertebrata</taxon>
        <taxon>Euteleostomi</taxon>
        <taxon>Mammalia</taxon>
        <taxon>Eutheria</taxon>
        <taxon>Euarchontoglires</taxon>
        <taxon>Glires</taxon>
        <taxon>Rodentia</taxon>
        <taxon>Myomorpha</taxon>
        <taxon>Muroidea</taxon>
        <taxon>Muridae</taxon>
        <taxon>Murinae</taxon>
        <taxon>Mus</taxon>
        <taxon>Mus</taxon>
    </lineage>
</organism>
<name>NCOR1_MOUSE</name>
<evidence type="ECO:0000250" key="1"/>
<evidence type="ECO:0000250" key="2">
    <source>
        <dbReference type="UniProtKB" id="O75376"/>
    </source>
</evidence>
<evidence type="ECO:0000250" key="3">
    <source>
        <dbReference type="UniProtKB" id="Q9WUB5"/>
    </source>
</evidence>
<evidence type="ECO:0000255" key="4"/>
<evidence type="ECO:0000255" key="5">
    <source>
        <dbReference type="PROSITE-ProRule" id="PRU00624"/>
    </source>
</evidence>
<evidence type="ECO:0000256" key="6">
    <source>
        <dbReference type="SAM" id="MobiDB-lite"/>
    </source>
</evidence>
<evidence type="ECO:0000269" key="7">
    <source>
    </source>
</evidence>
<evidence type="ECO:0000269" key="8">
    <source>
    </source>
</evidence>
<evidence type="ECO:0000269" key="9">
    <source>
    </source>
</evidence>
<evidence type="ECO:0000269" key="10">
    <source>
    </source>
</evidence>
<evidence type="ECO:0000269" key="11">
    <source>
    </source>
</evidence>
<evidence type="ECO:0000269" key="12">
    <source>
    </source>
</evidence>
<evidence type="ECO:0000269" key="13">
    <source>
    </source>
</evidence>
<evidence type="ECO:0000269" key="14">
    <source>
    </source>
</evidence>
<evidence type="ECO:0000269" key="15">
    <source>
    </source>
</evidence>
<evidence type="ECO:0000269" key="16">
    <source>
    </source>
</evidence>
<evidence type="ECO:0000269" key="17">
    <source>
    </source>
</evidence>
<evidence type="ECO:0000269" key="18">
    <source>
    </source>
</evidence>
<evidence type="ECO:0000269" key="19">
    <source>
    </source>
</evidence>
<evidence type="ECO:0000269" key="20">
    <source>
    </source>
</evidence>
<evidence type="ECO:0000269" key="21">
    <source>
    </source>
</evidence>
<evidence type="ECO:0000303" key="22">
    <source>
    </source>
</evidence>
<evidence type="ECO:0000305" key="23"/>
<evidence type="ECO:0007744" key="24">
    <source>
    </source>
</evidence>
<evidence type="ECO:0007744" key="25">
    <source>
    </source>
</evidence>
<evidence type="ECO:0007744" key="26">
    <source>
    </source>
</evidence>
<evidence type="ECO:0007744" key="27">
    <source>
    </source>
</evidence>
<evidence type="ECO:0007744" key="28">
    <source>
    </source>
</evidence>
<proteinExistence type="evidence at protein level"/>
<reference key="1">
    <citation type="journal article" date="1995" name="Nature">
        <title>Ligand-independent repression by the thyroid hormone receptor mediated by a nuclear receptor co-repressor.</title>
        <authorList>
            <person name="Hoerlein A.J."/>
            <person name="Naeaer A.M."/>
            <person name="Heinzel T."/>
            <person name="Torchia J."/>
            <person name="Gloss B."/>
            <person name="Kurokawa R."/>
            <person name="Ryan A."/>
            <person name="Kamei Y."/>
            <person name="Soederstroem M."/>
            <person name="Glass C.K."/>
            <person name="Rosenfeld M.G."/>
        </authorList>
    </citation>
    <scope>NUCLEOTIDE SEQUENCE [MRNA] (ISOFORMS 1 AND 2)</scope>
    <source>
        <tissue>Pituitary</tissue>
    </source>
</reference>
<reference key="2">
    <citation type="journal article" date="1995" name="Mol. Endocrinol.">
        <title>Isolation of proteins that interact specifically with the retinoid X receptor: two novel orphan receptors.</title>
        <authorList>
            <person name="Seol W."/>
            <person name="Choi H.S."/>
            <person name="Moore D.D."/>
        </authorList>
    </citation>
    <scope>NUCLEOTIDE SEQUENCE [MRNA] OF 1792-2453 (ISOFORM 1)</scope>
    <source>
        <tissue>Liver</tissue>
    </source>
</reference>
<reference key="3">
    <citation type="journal article" date="1996" name="Mol. Endocrinol.">
        <title>Two receptor interacting domains in the nuclear hormone receptor corepressor RIP13/N-CoR.</title>
        <authorList>
            <person name="Seol W."/>
            <person name="Mahon M.J."/>
            <person name="Lee Y.-K."/>
            <person name="Moore D.D."/>
        </authorList>
    </citation>
    <scope>INTERACTION WITH RARB; RXRA AND THRB</scope>
    <scope>DOMAINS ID1 AND ID2</scope>
</reference>
<reference key="4">
    <citation type="journal article" date="1997" name="Nature">
        <title>A complex containing N-CoR, mSin3 and histone deacetylase mediates transcriptional repression.</title>
        <authorList>
            <person name="Heinzel T."/>
            <person name="Lavinsky R.M."/>
            <person name="Mullen T.-M."/>
            <person name="Soederstroem M."/>
            <person name="Laherty C.D."/>
            <person name="Torchia J."/>
            <person name="Yang W.M."/>
            <person name="Brard G."/>
            <person name="Ngo S.D."/>
            <person name="Davie J.R."/>
            <person name="Seto E."/>
            <person name="Eisenman R.N."/>
            <person name="Rose D.W."/>
            <person name="Glass C.K."/>
            <person name="Rosenfeld M.G."/>
        </authorList>
    </citation>
    <scope>INTERACTION WITH SIN3A AND SIN3B</scope>
</reference>
<reference key="5">
    <citation type="journal article" date="1997" name="Proc. Natl. Acad. Sci. U.S.A.">
        <title>Cloning and characterization of a corepressor and potential component of the nuclear hormone receptor repression complex.</title>
        <authorList>
            <person name="Zamir I."/>
            <person name="Dawson J."/>
            <person name="Lavinsky R.M."/>
            <person name="Glass C.K."/>
            <person name="Rosenfeld M.G."/>
            <person name="Lazar M.A."/>
        </authorList>
    </citation>
    <scope>INTERACTION WITH C1D</scope>
</reference>
<reference key="6">
    <citation type="journal article" date="1998" name="Genes Dev.">
        <title>Proteasomal regulation of nuclear receptor corepressor-mediated repression.</title>
        <authorList>
            <person name="Zhang J."/>
            <person name="Guenther M.G."/>
            <person name="Carthew R.W."/>
            <person name="Lazar M.A."/>
        </authorList>
    </citation>
    <scope>INTERACTION WITH SIAH2</scope>
    <scope>DEGRADATION</scope>
</reference>
<reference key="7">
    <citation type="journal article" date="1998" name="Mol. Cell">
        <title>SAP30, a component of the mSin3 corepressor complex involved in N-CoR-mediated repression by specific transcription factors.</title>
        <authorList>
            <person name="Laherty C.D."/>
            <person name="Billin A.N."/>
            <person name="Lavinsky R.M."/>
            <person name="Yochum G.S."/>
            <person name="Bush A.C."/>
            <person name="Sun J.-M."/>
            <person name="Mullen T.-M."/>
            <person name="Davie J.R."/>
            <person name="Rose D.W."/>
            <person name="Glass C.K."/>
            <person name="Rosenfeld M.G."/>
            <person name="Ayer D.E."/>
            <person name="Eisenman R.N."/>
        </authorList>
    </citation>
    <scope>INTERACTION WITH SAP30 AND SIN3A</scope>
</reference>
<reference key="8">
    <citation type="journal article" date="2000" name="Proc. Natl. Acad. Sci. U.S.A.">
        <title>Identification of a nuclear domain with deacetylase activity.</title>
        <authorList>
            <person name="Downes M."/>
            <person name="Ordentlich P."/>
            <person name="Kao H.-Y."/>
            <person name="Alvarez J.G.A."/>
            <person name="Evans R.M."/>
        </authorList>
    </citation>
    <scope>INTERACTION WITH HDAC7</scope>
</reference>
<reference key="9">
    <citation type="journal article" date="2001" name="Mol. Cell. Biol.">
        <title>ETO, a target of t(8;21) in acute leukemia, makes distinct contacts with multiple histone deacetylases and binds mSin3A through its oligomerization domain.</title>
        <authorList>
            <person name="Amann J.M."/>
            <person name="Nip J."/>
            <person name="Strom D.K."/>
            <person name="Lutterbach B."/>
            <person name="Harada H."/>
            <person name="Lenny N."/>
            <person name="Downing J.R."/>
            <person name="Meyers S."/>
            <person name="Hiebert S.W."/>
        </authorList>
    </citation>
    <scope>INTERACTION WITH CBFA2T3</scope>
</reference>
<reference key="10">
    <citation type="journal article" date="2002" name="Science">
        <title>Tissue-specific regulation of retinal and pituitary precursor cell proliferation.</title>
        <authorList>
            <person name="Li X."/>
            <person name="Perissi V."/>
            <person name="Liu F."/>
            <person name="Rose D.W."/>
            <person name="Rosenfeld M.G."/>
        </authorList>
    </citation>
    <scope>INTERACTION WITH DACH1</scope>
</reference>
<reference key="11">
    <citation type="journal article" date="2007" name="Mol. Cell. Proteomics">
        <title>Lysine trimethylation of retinoic acid receptor-alpha: a novel means to regulate receptor function.</title>
        <authorList>
            <person name="Huq M.D."/>
            <person name="Tsai N.-P."/>
            <person name="Khan S.A."/>
            <person name="Wei L.-N."/>
        </authorList>
    </citation>
    <scope>INTERACTION WITH RARA</scope>
</reference>
<reference key="12">
    <citation type="journal article" date="2007" name="Proc. Natl. Acad. Sci. U.S.A.">
        <title>Large-scale phosphorylation analysis of mouse liver.</title>
        <authorList>
            <person name="Villen J."/>
            <person name="Beausoleil S.A."/>
            <person name="Gerber S.A."/>
            <person name="Gygi S.P."/>
        </authorList>
    </citation>
    <scope>PHOSPHORYLATION [LARGE SCALE ANALYSIS] AT SER-1481; SER-2449 AND SER-2451</scope>
    <scope>IDENTIFICATION BY MASS SPECTROMETRY [LARGE SCALE ANALYSIS]</scope>
    <source>
        <tissue>Liver</tissue>
    </source>
</reference>
<reference key="13">
    <citation type="journal article" date="2008" name="Nature">
        <title>Nuclear receptor corepressor and histone deacetylase 3 govern circadian metabolic physiology.</title>
        <authorList>
            <person name="Alenghat T."/>
            <person name="Meyers K."/>
            <person name="Mullican S.E."/>
            <person name="Leitner K."/>
            <person name="Adeniji-Adele A."/>
            <person name="Avila J."/>
            <person name="Bucan M."/>
            <person name="Ahima R.S."/>
            <person name="Kaestner K.H."/>
            <person name="Lazar M.A."/>
        </authorList>
    </citation>
    <scope>FUNCTION</scope>
    <scope>INTERACTION WITH HDAC3</scope>
    <scope>MUTAGENESIS OF TYR-478</scope>
</reference>
<reference key="14">
    <citation type="journal article" date="2009" name="EMBO J.">
        <title>A coordinated phosphorylation cascade initiated by p38MAPK/MSK1 directs RARalpha to target promoters.</title>
        <authorList>
            <person name="Bruck N."/>
            <person name="Vitoux D."/>
            <person name="Ferry C."/>
            <person name="Duong V."/>
            <person name="Bauer A."/>
            <person name="de The H."/>
            <person name="Rochette-Egly C."/>
        </authorList>
    </citation>
    <scope>INTERACTION WITH RARA</scope>
</reference>
<reference key="15">
    <citation type="journal article" date="2009" name="Immunity">
        <title>The phagosomal proteome in interferon-gamma-activated macrophages.</title>
        <authorList>
            <person name="Trost M."/>
            <person name="English L."/>
            <person name="Lemieux S."/>
            <person name="Courcelles M."/>
            <person name="Desjardins M."/>
            <person name="Thibault P."/>
        </authorList>
    </citation>
    <scope>PHOSPHORYLATION [LARGE SCALE ANALYSIS] AT SER-224 AND SER-1481</scope>
    <scope>IDENTIFICATION BY MASS SPECTROMETRY [LARGE SCALE ANALYSIS]</scope>
</reference>
<reference key="16">
    <citation type="journal article" date="2009" name="Mol. Cell. Proteomics">
        <title>Large scale localization of protein phosphorylation by use of electron capture dissociation mass spectrometry.</title>
        <authorList>
            <person name="Sweet S.M."/>
            <person name="Bailey C.M."/>
            <person name="Cunningham D.L."/>
            <person name="Heath J.K."/>
            <person name="Cooper H.J."/>
        </authorList>
    </citation>
    <scope>PHOSPHORYLATION [LARGE SCALE ANALYSIS] AT SER-2198</scope>
    <scope>IDENTIFICATION BY MASS SPECTROMETRY [LARGE SCALE ANALYSIS]</scope>
    <source>
        <tissue>Embryonic fibroblast</tissue>
    </source>
</reference>
<reference key="17">
    <citation type="journal article" date="2009" name="Mol. Pharmacol.">
        <title>The basic helix-loop-helix proteins differentiated embryo chondrocyte (DEC) 1 and DEC2 function as corepressors of retinoid X receptors.</title>
        <authorList>
            <person name="Cho Y."/>
            <person name="Noshiro M."/>
            <person name="Choi M."/>
            <person name="Morita K."/>
            <person name="Kawamoto T."/>
            <person name="Fujimoto K."/>
            <person name="Kato Y."/>
            <person name="Makishima M."/>
        </authorList>
    </citation>
    <scope>INTERACTION WITH RXRA</scope>
</reference>
<reference key="18">
    <citation type="journal article" date="2010" name="Cell">
        <title>A tissue-specific atlas of mouse protein phosphorylation and expression.</title>
        <authorList>
            <person name="Huttlin E.L."/>
            <person name="Jedrychowski M.P."/>
            <person name="Elias J.E."/>
            <person name="Goswami T."/>
            <person name="Rad R."/>
            <person name="Beausoleil S.A."/>
            <person name="Villen J."/>
            <person name="Haas W."/>
            <person name="Sowa M.E."/>
            <person name="Gygi S.P."/>
        </authorList>
    </citation>
    <scope>PHOSPHORYLATION [LARGE SCALE ANALYSIS] AT SER-1011; SER-1122; THR-1378; SER-1459; SER-1481; SER-1993 AND SER-2198</scope>
    <scope>IDENTIFICATION BY MASS SPECTROMETRY [LARGE SCALE ANALYSIS]</scope>
    <source>
        <tissue>Brain</tissue>
        <tissue>Brown adipose tissue</tissue>
        <tissue>Heart</tissue>
        <tissue>Kidney</tissue>
        <tissue>Liver</tissue>
        <tissue>Lung</tissue>
        <tissue>Pancreas</tissue>
        <tissue>Spleen</tissue>
        <tissue>Testis</tissue>
    </source>
</reference>
<reference key="19">
    <citation type="journal article" date="2011" name="Nature">
        <title>Suppression of TH17 differentiation and autoimmunity by a synthetic ROR ligand.</title>
        <authorList>
            <person name="Solt L.A."/>
            <person name="Kumar N."/>
            <person name="Nuhant P."/>
            <person name="Wang Y."/>
            <person name="Lauer J.L."/>
            <person name="Liu J."/>
            <person name="Istrate M.A."/>
            <person name="Kamenecka T.M."/>
            <person name="Roush W.R."/>
            <person name="Vidovic D."/>
            <person name="Schuerer S.C."/>
            <person name="Xu J."/>
            <person name="Wagoner G."/>
            <person name="Drew P.D."/>
            <person name="Griffin P.R."/>
            <person name="Burris T.P."/>
        </authorList>
    </citation>
    <scope>INTERACTION WITH RORA AND RORC</scope>
</reference>
<reference key="20">
    <citation type="journal article" date="2013" name="Mol. Cell">
        <title>SIRT5-mediated lysine desuccinylation impacts diverse metabolic pathways.</title>
        <authorList>
            <person name="Park J."/>
            <person name="Chen Y."/>
            <person name="Tishkoff D.X."/>
            <person name="Peng C."/>
            <person name="Tan M."/>
            <person name="Dai L."/>
            <person name="Xie Z."/>
            <person name="Zhang Y."/>
            <person name="Zwaans B.M."/>
            <person name="Skinner M.E."/>
            <person name="Lombard D.B."/>
            <person name="Zhao Y."/>
        </authorList>
    </citation>
    <scope>ACETYLATION [LARGE SCALE ANALYSIS] AT LYS-1347</scope>
    <scope>IDENTIFICATION BY MASS SPECTROMETRY [LARGE SCALE ANALYSIS]</scope>
    <source>
        <tissue>Embryonic fibroblast</tissue>
    </source>
</reference>
<reference key="21">
    <citation type="journal article" date="2014" name="J. Biol. Chem.">
        <title>Circadian regulation of Tshb gene expression by Rev-Erbalpha (NR1D1) and nuclear corepressor 1 (NCOR1).</title>
        <authorList>
            <person name="Aninye I.O."/>
            <person name="Matsumoto S."/>
            <person name="Sidhaye A.R."/>
            <person name="Wondisford F.E."/>
        </authorList>
    </citation>
    <scope>FUNCTION</scope>
</reference>
<reference key="22">
    <citation type="journal article" date="2016" name="Development">
        <title>Setd5 is essential for mammalian development and the co-transcriptional regulation of histone acetylation.</title>
        <authorList>
            <person name="Osipovich A.B."/>
            <person name="Gangula R."/>
            <person name="Vianna P.G."/>
            <person name="Magnuson M.A."/>
        </authorList>
    </citation>
    <scope>INTERACTION WITH SETD5</scope>
</reference>
<keyword id="KW-0007">Acetylation</keyword>
<keyword id="KW-0025">Alternative splicing</keyword>
<keyword id="KW-0090">Biological rhythms</keyword>
<keyword id="KW-0156">Chromatin regulator</keyword>
<keyword id="KW-0175">Coiled coil</keyword>
<keyword id="KW-0238">DNA-binding</keyword>
<keyword id="KW-1017">Isopeptide bond</keyword>
<keyword id="KW-0539">Nucleus</keyword>
<keyword id="KW-0597">Phosphoprotein</keyword>
<keyword id="KW-1185">Reference proteome</keyword>
<keyword id="KW-0677">Repeat</keyword>
<keyword id="KW-0678">Repressor</keyword>
<keyword id="KW-0804">Transcription</keyword>
<keyword id="KW-0805">Transcription regulation</keyword>
<keyword id="KW-0832">Ubl conjugation</keyword>
<protein>
    <recommendedName>
        <fullName>Nuclear receptor corepressor 1</fullName>
        <shortName>N-CoR</shortName>
        <shortName>N-CoR1</shortName>
    </recommendedName>
    <alternativeName>
        <fullName>Retinoid X receptor-interacting protein 13</fullName>
        <shortName>RIP13</shortName>
    </alternativeName>
</protein>
<sequence length="2453" mass="270642">MSSSGYPPNQGAFSTEQSRYPSHSVQYTFPSARHQQEFAVPDYRSSHLEVSQASQLLQQQQQQQLRRRPSLLSEFHPGSDRPQERRSGYEQFHPGPSPVDHDSLESKRPRLEQVSDSHFQRISAAVLPLVHTLPEGLRSSANAKKDPAFGVKHEAPSSPLSGQPCGDDQNASPSKLSKEELIQSMDRVDREIAKVEQQILKLKKKQQQLEEEAAKPPEPEKPVSPPPVEQKHRSIVQIIYDENRKKAEEAHKIFEGLGPKVELPLYNQPSDTKVYHENIKTNQVMRKKLILFFKRRNHARKQREQKICQRYDQLMEAWEKKVDRIENNPRRKAKESKTREYYEKQFPEIRKQREQQERFQRVGQRGAGLSATIARSEHEISEIIDGLSEQENNEKQMRQLSVIPPMMFDAEQRRVKFINMNGLMEDPMKVYKDRQFMNVWTDHEKEIFKDKFIQHPKNFGLIASYLERKSVPDCVLYYYLTKKNENYKALVRRNYGKRRGRNQQIARPSQEEKVEEKEEDKAEKTEKKEEEKKDDEEKDDKEDSKETTKEKDRTEATAEEPEEREQVTPRGRKTANSQGRGKGRVTRSMTSEAAAANAAAAATEEPPPPLPPPPEPISTEPVETSRWTEEEMEVAKKGLVEHGRNWAAIAKMVGTKSEAQCKNFYFNYKRRHNLDNLLQQHKQKASRKPREERDVSQCESVASTVSAQEDEDIEASNEEENPEDSEGAENSSDTESAPSPSPVEAAKSSEDSSENAASRGNTEPVAELEATTDPAPCASPSSAVPTTKPAERESVEAQVTDSASAETAEPMDVDHEECGAEGSSVLDPPAPTKADSVDPEMQVPENTASKGEGDAKERDLESTSEKTEARDEDVVVAEQIERPEPQSDDDSSATCSADEGVDGEPERQRVFPMDAKPSLLTPPGSILISSPIKPNLLDLPQLQHRAAVIPPMVSCTPCNIPIGTPVSGYALYQRHIKAMHESALLEEQRQRQEQVDLECRSSTSPCSTSKSPNREWEVLQPAPHQVITNLPEGVRLPTTRPTRPPPPLIPSSKTTVASEKPSFIMGGSISQGTPGTYLSSHNQAYPQEAPKPSVGSISLGLPRQQESTKAAPLTYIKQEEFSPRSQNSQPEGLLVRAQHEGVVRGTAGAVQEGSITRGTPASKISVETISSLRGSITQGTPALPQAGIPTEALVKGPVSRMPIEESSPEKVREEAASKGHVIYEGKSGHILSYDNIKNAREGTRSPRTAHEMSLKRSYEAVEGSIKQGMSMRESPVSAPLEGLICRALPRGSPHSDLKERTVLSGSIMQGTPRATAESFEDGLKYPKQIKRESPPIRAFEGAITKGKPYDGITTIKEMGRSIHEIPRQDILTQESRKTPEVVQSTRPIIEGSISQGTPIKFDNNSGQSAIKHNVKSLITGPSKLPRGMLEIVPENIKVVERGKYEDVKAGEPVRARHTSVVSSGPSVLRSTLHEAPKAQLSPGLYDDSSARRTPVSYQNTISRGSPMMNRTSDVSSSKSASHERKSTLTPTQRESIPAKSPVPGVDPIVSHSPFDPHHRSSAAGEVYRSHLPTHLDPAMPFHRALDPAAAYLLQRQLSPTPGYPSQYQLYAMENTRQTILNDYITSQQMQVNLRPDVTRGLSPREQPLGLPYPATRGIIDLTNMPPTILVPHAGGTSTPPMDRITYIPGTQVTFPPRPYNAASLSPGHPTHLAAAASAEREREREREKERERERERERERERERIAAAPADLYLRPGSEQPGRPGSHGYVRSPSPSVRTQETILQQRPSVFQGTNGTSVITPLDPTAQLRIMPLPSGGPSISQGLPASRYNTAADALAALVDAAASAPQMDVSKTKESKHEAARLEENLRSRSAAVSEQQQLEQKNLEVEKRSVQCVCTSSALPSGKAQPHASVVYSEAGKDKGPPPKSRYEEELRTRGKTTITAANFIDVIITRQIASDKDARERGSQSSDSSSSLSSHRYETASDAIEVISPASSPAPPQEKPQAYQPDMVKANQAENESTRQYEGPLHHYRSQQESPSPQQQPPLPPSSQSEGMGQVPRTHRLITLADHICQIITQDFARNQVPSQASTSTFQTSPSALSSTPVRTKTSSRYSPESQSQTVLHPRPGPRVSPENLVDKSRGSRPGKSPERSHIPSEPYEPISPPQGPAVHEKQDSMLLLSQRGVDPAEQRSDSRSPGSISYLPSFFTKLESTSPMVKSKKQEIFRKLNSSGGGDSDMAAAQPGTEIFNLPAVTTSGAVSSRSHSFADPASNLGLEDIIRKALMGSFDDKVEDHGVVMSHPVGIMPGSASTSVVTSSEARRDEGEPSPHAGVCKPKLINKSNSRKSKSPIPGQSYLGTERPSSVSSVHSEGDYHRQTPGWAWEDRPSSTGSTQFPYNPLTIRMLSSTPPTQIACAPSAITQAAPHQQNRIWEREPAPLLSAQYETLSDSDD</sequence>
<gene>
    <name type="primary">Ncor1</name>
    <name type="synonym">Rxrip13</name>
</gene>
<feature type="chain" id="PRO_0000055618" description="Nuclear receptor corepressor 1">
    <location>
        <begin position="1"/>
        <end position="2453"/>
    </location>
</feature>
<feature type="domain" description="SANT 1" evidence="5">
    <location>
        <begin position="435"/>
        <end position="486"/>
    </location>
</feature>
<feature type="domain" description="SANT 2" evidence="5">
    <location>
        <begin position="622"/>
        <end position="673"/>
    </location>
</feature>
<feature type="region of interest" description="Interaction with ZBTB33 and HEXIM1" evidence="1">
    <location>
        <begin position="1"/>
        <end position="373"/>
    </location>
</feature>
<feature type="region of interest" description="Disordered" evidence="6">
    <location>
        <begin position="1"/>
        <end position="116"/>
    </location>
</feature>
<feature type="region of interest" description="Disordered" evidence="6">
    <location>
        <begin position="147"/>
        <end position="177"/>
    </location>
</feature>
<feature type="region of interest" description="Disordered" evidence="6">
    <location>
        <begin position="206"/>
        <end position="231"/>
    </location>
</feature>
<feature type="region of interest" description="Interaction with SIN3A/B">
    <location>
        <begin position="254"/>
        <end position="312"/>
    </location>
</feature>
<feature type="region of interest" description="Disordered" evidence="6">
    <location>
        <begin position="497"/>
        <end position="631"/>
    </location>
</feature>
<feature type="region of interest" description="Disordered" evidence="6">
    <location>
        <begin position="677"/>
        <end position="908"/>
    </location>
</feature>
<feature type="region of interest" description="Disordered" evidence="6">
    <location>
        <begin position="1034"/>
        <end position="1058"/>
    </location>
</feature>
<feature type="region of interest" description="Disordered" evidence="6">
    <location>
        <begin position="1450"/>
        <end position="1544"/>
    </location>
</feature>
<feature type="region of interest" description="Interaction with C1D" evidence="19">
    <location>
        <begin position="1510"/>
        <end position="2453"/>
    </location>
</feature>
<feature type="region of interest" description="Disordered" evidence="6">
    <location>
        <begin position="1697"/>
        <end position="1780"/>
    </location>
</feature>
<feature type="region of interest" description="Disordered" evidence="6">
    <location>
        <begin position="1902"/>
        <end position="1939"/>
    </location>
</feature>
<feature type="region of interest" description="Disordered" evidence="6">
    <location>
        <begin position="1959"/>
        <end position="2060"/>
    </location>
</feature>
<feature type="region of interest" description="ID1">
    <location>
        <begin position="2050"/>
        <end position="2129"/>
    </location>
</feature>
<feature type="region of interest" description="Required for interaction with RARA in the absence of its ligand" evidence="1">
    <location>
        <begin position="2065"/>
        <end position="2068"/>
    </location>
</feature>
<feature type="region of interest" description="Disordered" evidence="6">
    <location>
        <begin position="2088"/>
        <end position="2174"/>
    </location>
</feature>
<feature type="region of interest" description="ID2">
    <location>
        <begin position="2226"/>
        <end position="2287"/>
    </location>
</feature>
<feature type="region of interest" description="Disordered" evidence="6">
    <location>
        <begin position="2303"/>
        <end position="2396"/>
    </location>
</feature>
<feature type="coiled-coil region" evidence="4">
    <location>
        <begin position="174"/>
        <end position="216"/>
    </location>
</feature>
<feature type="coiled-coil region" evidence="4">
    <location>
        <begin position="299"/>
        <end position="328"/>
    </location>
</feature>
<feature type="coiled-coil region" evidence="4">
    <location>
        <begin position="501"/>
        <end position="550"/>
    </location>
</feature>
<feature type="short sequence motif" description="CORNR box 1">
    <location>
        <begin position="1949"/>
        <end position="1953"/>
    </location>
</feature>
<feature type="short sequence motif" description="CORNR box 2">
    <location>
        <begin position="2073"/>
        <end position="2077"/>
    </location>
</feature>
<feature type="short sequence motif" description="CORNR box 3">
    <location>
        <begin position="2277"/>
        <end position="2281"/>
    </location>
</feature>
<feature type="compositionally biased region" description="Polar residues" evidence="6">
    <location>
        <begin position="1"/>
        <end position="29"/>
    </location>
</feature>
<feature type="compositionally biased region" description="Low complexity" evidence="6">
    <location>
        <begin position="51"/>
        <end position="64"/>
    </location>
</feature>
<feature type="compositionally biased region" description="Basic and acidic residues" evidence="6">
    <location>
        <begin position="77"/>
        <end position="88"/>
    </location>
</feature>
<feature type="compositionally biased region" description="Basic and acidic residues" evidence="6">
    <location>
        <begin position="99"/>
        <end position="116"/>
    </location>
</feature>
<feature type="compositionally biased region" description="Basic and acidic residues" evidence="6">
    <location>
        <begin position="212"/>
        <end position="221"/>
    </location>
</feature>
<feature type="compositionally biased region" description="Basic and acidic residues" evidence="6">
    <location>
        <begin position="509"/>
        <end position="531"/>
    </location>
</feature>
<feature type="compositionally biased region" description="Basic and acidic residues" evidence="6">
    <location>
        <begin position="541"/>
        <end position="556"/>
    </location>
</feature>
<feature type="compositionally biased region" description="Low complexity" evidence="6">
    <location>
        <begin position="592"/>
        <end position="604"/>
    </location>
</feature>
<feature type="compositionally biased region" description="Pro residues" evidence="6">
    <location>
        <begin position="605"/>
        <end position="616"/>
    </location>
</feature>
<feature type="compositionally biased region" description="Polar residues" evidence="6">
    <location>
        <begin position="697"/>
        <end position="707"/>
    </location>
</feature>
<feature type="compositionally biased region" description="Acidic residues" evidence="6">
    <location>
        <begin position="708"/>
        <end position="727"/>
    </location>
</feature>
<feature type="compositionally biased region" description="Low complexity" evidence="6">
    <location>
        <begin position="771"/>
        <end position="787"/>
    </location>
</feature>
<feature type="compositionally biased region" description="Basic and acidic residues" evidence="6">
    <location>
        <begin position="851"/>
        <end position="885"/>
    </location>
</feature>
<feature type="compositionally biased region" description="Polar residues" evidence="6">
    <location>
        <begin position="1459"/>
        <end position="1469"/>
    </location>
</feature>
<feature type="compositionally biased region" description="Polar residues" evidence="6">
    <location>
        <begin position="1495"/>
        <end position="1514"/>
    </location>
</feature>
<feature type="compositionally biased region" description="Basic and acidic residues" evidence="6">
    <location>
        <begin position="1718"/>
        <end position="1745"/>
    </location>
</feature>
<feature type="compositionally biased region" description="Basic and acidic residues" evidence="6">
    <location>
        <begin position="1919"/>
        <end position="1937"/>
    </location>
</feature>
<feature type="compositionally biased region" description="Low complexity" evidence="6">
    <location>
        <begin position="1968"/>
        <end position="1979"/>
    </location>
</feature>
<feature type="compositionally biased region" description="Polar residues" evidence="6">
    <location>
        <begin position="2088"/>
        <end position="2124"/>
    </location>
</feature>
<feature type="compositionally biased region" description="Basic and acidic residues" evidence="6">
    <location>
        <begin position="2138"/>
        <end position="2156"/>
    </location>
</feature>
<feature type="compositionally biased region" description="Low complexity" evidence="6">
    <location>
        <begin position="2310"/>
        <end position="2319"/>
    </location>
</feature>
<feature type="modified residue" description="Phosphoserine" evidence="2">
    <location>
        <position position="172"/>
    </location>
</feature>
<feature type="modified residue" description="Phosphoserine" evidence="26">
    <location>
        <position position="224"/>
    </location>
</feature>
<feature type="modified residue" description="Phosphoserine" evidence="27">
    <location>
        <position position="1011"/>
    </location>
</feature>
<feature type="modified residue" description="Phosphoserine" evidence="27">
    <location>
        <position position="1122"/>
    </location>
</feature>
<feature type="modified residue" description="Phosphoserine" evidence="2">
    <location>
        <position position="1206"/>
    </location>
</feature>
<feature type="modified residue" description="Phosphoserine" evidence="2">
    <location>
        <position position="1207"/>
    </location>
</feature>
<feature type="modified residue" description="Phosphoserine" evidence="2">
    <location>
        <position position="1274"/>
    </location>
</feature>
<feature type="modified residue" description="Phosphoserine" evidence="2">
    <location>
        <position position="1292"/>
    </location>
</feature>
<feature type="modified residue" description="Phosphoserine" evidence="2">
    <location>
        <position position="1333"/>
    </location>
</feature>
<feature type="modified residue" description="N6-acetyllysine" evidence="28">
    <location>
        <position position="1347"/>
    </location>
</feature>
<feature type="modified residue" description="Phosphothreonine" evidence="27">
    <location>
        <position position="1378"/>
    </location>
</feature>
<feature type="modified residue" description="N6-acetyllysine; alternate" evidence="2">
    <location>
        <position position="1423"/>
    </location>
</feature>
<feature type="modified residue" description="Phosphoserine" evidence="27">
    <location>
        <position position="1459"/>
    </location>
</feature>
<feature type="modified residue" description="Phosphoserine" evidence="24 26 27">
    <location>
        <position position="1481"/>
    </location>
</feature>
<feature type="modified residue" description="Phosphoserine" evidence="2">
    <location>
        <position position="1598"/>
    </location>
</feature>
<feature type="modified residue" description="Phosphoserine" evidence="27">
    <location>
        <position position="1993"/>
    </location>
</feature>
<feature type="modified residue" description="Phosphoserine" evidence="2">
    <location>
        <position position="1997"/>
    </location>
</feature>
<feature type="modified residue" description="Phosphoserine" evidence="3">
    <location>
        <position position="2116"/>
    </location>
</feature>
<feature type="modified residue" description="Phosphoserine" evidence="2">
    <location>
        <position position="2134"/>
    </location>
</feature>
<feature type="modified residue" description="Phosphoserine" evidence="2">
    <location>
        <position position="2150"/>
    </location>
</feature>
<feature type="modified residue" description="Phosphoserine" evidence="2">
    <location>
        <position position="2165"/>
    </location>
</feature>
<feature type="modified residue" description="Phosphoserine" evidence="25 27">
    <location>
        <position position="2198"/>
    </location>
</feature>
<feature type="modified residue" description="Phosphothreonine" evidence="2">
    <location>
        <position position="2412"/>
    </location>
</feature>
<feature type="modified residue" description="Phosphoserine" evidence="24">
    <location>
        <position position="2449"/>
    </location>
</feature>
<feature type="modified residue" description="Phosphoserine" evidence="24">
    <location>
        <position position="2451"/>
    </location>
</feature>
<feature type="cross-link" description="Glycyl lysine isopeptide (Lys-Gly) (interchain with G-Cter in SUMO1); alternate" evidence="2">
    <location>
        <position position="1117"/>
    </location>
</feature>
<feature type="cross-link" description="Glycyl lysine isopeptide (Lys-Gly) (interchain with G-Cter in SUMO2); alternate" evidence="2">
    <location>
        <position position="1117"/>
    </location>
</feature>
<feature type="cross-link" description="Glycyl lysine isopeptide (Lys-Gly) (interchain with G-Cter in SUMO2)" evidence="2">
    <location>
        <position position="1195"/>
    </location>
</feature>
<feature type="cross-link" description="Glycyl lysine isopeptide (Lys-Gly) (interchain with G-Cter in SUMO2)" evidence="2">
    <location>
        <position position="1400"/>
    </location>
</feature>
<feature type="cross-link" description="Glycyl lysine isopeptide (Lys-Gly) (interchain with G-Cter in SUMO2); alternate" evidence="2">
    <location>
        <position position="1423"/>
    </location>
</feature>
<feature type="cross-link" description="Glycyl lysine isopeptide (Lys-Gly) (interchain with G-Cter in SUMO2)" evidence="2">
    <location>
        <position position="1525"/>
    </location>
</feature>
<feature type="splice variant" id="VSP_003411" description="In isoform 2." evidence="22">
    <location>
        <begin position="2333"/>
        <end position="2371"/>
    </location>
</feature>
<feature type="mutagenesis site" description="In DADm mutant; loss of ability to interact with HDAC3 which causes aberrant regulation of clock genes and results in abnormal circadian behavior. Mice are also leaner and more insulin sensitive due to increased energy expenditure and exhibit dramatic alterations in cyclic expression of several critical genes involved in lipid metabolism in the liver." evidence="11">
    <original>Y</original>
    <variation>A</variation>
    <location>
        <position position="478"/>
    </location>
</feature>
<feature type="sequence conflict" description="In Ref. 2; AAC52168." evidence="23" ref="2">
    <original>I</original>
    <variation>T</variation>
    <location>
        <position position="1952"/>
    </location>
</feature>
<feature type="sequence conflict" description="In Ref. 2; AAC52168." evidence="23" ref="2">
    <original>A</original>
    <variation>P</variation>
    <location>
        <position position="2090"/>
    </location>
</feature>
<accession>Q60974</accession>
<accession>Q60812</accession>
<dbReference type="EMBL" id="U35312">
    <property type="protein sequence ID" value="AAB17125.1"/>
    <property type="molecule type" value="mRNA"/>
</dbReference>
<dbReference type="EMBL" id="U22016">
    <property type="protein sequence ID" value="AAC52168.1"/>
    <property type="molecule type" value="mRNA"/>
</dbReference>
<dbReference type="PIR" id="S60254">
    <property type="entry name" value="S60254"/>
</dbReference>
<dbReference type="SASBDB" id="Q60974"/>
<dbReference type="SMR" id="Q60974"/>
<dbReference type="CORUM" id="Q60974"/>
<dbReference type="DIP" id="DIP-32548N"/>
<dbReference type="FunCoup" id="Q60974">
    <property type="interactions" value="1609"/>
</dbReference>
<dbReference type="IntAct" id="Q60974">
    <property type="interactions" value="29"/>
</dbReference>
<dbReference type="MINT" id="Q60974"/>
<dbReference type="STRING" id="10090.ENSMUSP00000018645"/>
<dbReference type="GlyGen" id="Q60974">
    <property type="glycosylation" value="20 sites, 2 N-linked glycans (2 sites), 1 O-linked glycan (17 sites)"/>
</dbReference>
<dbReference type="iPTMnet" id="Q60974"/>
<dbReference type="PhosphoSitePlus" id="Q60974"/>
<dbReference type="jPOST" id="Q60974"/>
<dbReference type="PaxDb" id="10090-ENSMUSP00000068974"/>
<dbReference type="PeptideAtlas" id="Q60974"/>
<dbReference type="ProteomicsDB" id="287458">
    <molecule id="Q60974-1"/>
</dbReference>
<dbReference type="ProteomicsDB" id="287459">
    <molecule id="Q60974-2"/>
</dbReference>
<dbReference type="Pumba" id="Q60974"/>
<dbReference type="AGR" id="MGI:1349717"/>
<dbReference type="MGI" id="MGI:1349717">
    <property type="gene designation" value="Ncor1"/>
</dbReference>
<dbReference type="eggNOG" id="KOG1878">
    <property type="taxonomic scope" value="Eukaryota"/>
</dbReference>
<dbReference type="InParanoid" id="Q60974"/>
<dbReference type="Reactome" id="R-MMU-2173795">
    <property type="pathway name" value="Downregulation of SMAD2/3:SMAD4 transcriptional activity"/>
</dbReference>
<dbReference type="Reactome" id="R-MMU-3214815">
    <property type="pathway name" value="HDACs deacetylate histones"/>
</dbReference>
<dbReference type="Reactome" id="R-MMU-350054">
    <property type="pathway name" value="Notch-HLH transcription pathway"/>
</dbReference>
<dbReference type="Reactome" id="R-MMU-381340">
    <property type="pathway name" value="Transcriptional regulation of white adipocyte differentiation"/>
</dbReference>
<dbReference type="Reactome" id="R-MMU-383280">
    <property type="pathway name" value="Nuclear Receptor transcription pathway"/>
</dbReference>
<dbReference type="Reactome" id="R-MMU-400206">
    <property type="pathway name" value="Regulation of lipid metabolism by PPARalpha"/>
</dbReference>
<dbReference type="Reactome" id="R-MMU-9029569">
    <property type="pathway name" value="NR1H3 &amp; NR1H2 regulate gene expression linked to cholesterol transport and efflux"/>
</dbReference>
<dbReference type="Reactome" id="R-MMU-9623433">
    <property type="pathway name" value="NR1H2 &amp; NR1H3 regulate gene expression to control bile acid homeostasis"/>
</dbReference>
<dbReference type="Reactome" id="R-MMU-9707564">
    <property type="pathway name" value="Cytoprotection by HMOX1"/>
</dbReference>
<dbReference type="Reactome" id="R-MMU-9841922">
    <property type="pathway name" value="MLL4 and MLL3 complexes regulate expression of PPARG target genes in adipogenesis and hepatic steatosis"/>
</dbReference>
<dbReference type="ChiTaRS" id="Ncor1">
    <property type="organism name" value="mouse"/>
</dbReference>
<dbReference type="PRO" id="PR:Q60974"/>
<dbReference type="Proteomes" id="UP000000589">
    <property type="component" value="Unplaced"/>
</dbReference>
<dbReference type="RNAct" id="Q60974">
    <property type="molecule type" value="protein"/>
</dbReference>
<dbReference type="GO" id="GO:0005737">
    <property type="term" value="C:cytoplasm"/>
    <property type="evidence" value="ECO:0000314"/>
    <property type="project" value="MGI"/>
</dbReference>
<dbReference type="GO" id="GO:0005829">
    <property type="term" value="C:cytosol"/>
    <property type="evidence" value="ECO:0000304"/>
    <property type="project" value="Reactome"/>
</dbReference>
<dbReference type="GO" id="GO:0005654">
    <property type="term" value="C:nucleoplasm"/>
    <property type="evidence" value="ECO:0000304"/>
    <property type="project" value="Reactome"/>
</dbReference>
<dbReference type="GO" id="GO:0005634">
    <property type="term" value="C:nucleus"/>
    <property type="evidence" value="ECO:0000314"/>
    <property type="project" value="MGI"/>
</dbReference>
<dbReference type="GO" id="GO:0005667">
    <property type="term" value="C:transcription regulator complex"/>
    <property type="evidence" value="ECO:0000353"/>
    <property type="project" value="MGI"/>
</dbReference>
<dbReference type="GO" id="GO:0017053">
    <property type="term" value="C:transcription repressor complex"/>
    <property type="evidence" value="ECO:0000353"/>
    <property type="project" value="MGI"/>
</dbReference>
<dbReference type="GO" id="GO:0003682">
    <property type="term" value="F:chromatin binding"/>
    <property type="evidence" value="ECO:0000314"/>
    <property type="project" value="MGI"/>
</dbReference>
<dbReference type="GO" id="GO:0003677">
    <property type="term" value="F:DNA binding"/>
    <property type="evidence" value="ECO:0000314"/>
    <property type="project" value="MGI"/>
</dbReference>
<dbReference type="GO" id="GO:0035033">
    <property type="term" value="F:histone deacetylase regulator activity"/>
    <property type="evidence" value="ECO:0000314"/>
    <property type="project" value="MGI"/>
</dbReference>
<dbReference type="GO" id="GO:0042974">
    <property type="term" value="F:nuclear retinoic acid receptor binding"/>
    <property type="evidence" value="ECO:0000314"/>
    <property type="project" value="MGI"/>
</dbReference>
<dbReference type="GO" id="GO:0046965">
    <property type="term" value="F:nuclear retinoid X receptor binding"/>
    <property type="evidence" value="ECO:0000314"/>
    <property type="project" value="MGI"/>
</dbReference>
<dbReference type="GO" id="GO:0046966">
    <property type="term" value="F:nuclear thyroid hormone receptor binding"/>
    <property type="evidence" value="ECO:0000314"/>
    <property type="project" value="MGI"/>
</dbReference>
<dbReference type="GO" id="GO:0019904">
    <property type="term" value="F:protein domain specific binding"/>
    <property type="evidence" value="ECO:0000353"/>
    <property type="project" value="BHF-UCL"/>
</dbReference>
<dbReference type="GO" id="GO:0043565">
    <property type="term" value="F:sequence-specific DNA binding"/>
    <property type="evidence" value="ECO:0000314"/>
    <property type="project" value="MGI"/>
</dbReference>
<dbReference type="GO" id="GO:0000976">
    <property type="term" value="F:transcription cis-regulatory region binding"/>
    <property type="evidence" value="ECO:0000314"/>
    <property type="project" value="BHF-UCL"/>
</dbReference>
<dbReference type="GO" id="GO:0003714">
    <property type="term" value="F:transcription corepressor activity"/>
    <property type="evidence" value="ECO:0000316"/>
    <property type="project" value="MGI"/>
</dbReference>
<dbReference type="GO" id="GO:0002361">
    <property type="term" value="P:CD4-positive, CD25-positive, alpha-beta regulatory T cell differentiation"/>
    <property type="evidence" value="ECO:0000315"/>
    <property type="project" value="MGI"/>
</dbReference>
<dbReference type="GO" id="GO:1904017">
    <property type="term" value="P:cellular response to Thyroglobulin triiodothyronine"/>
    <property type="evidence" value="ECO:0000316"/>
    <property type="project" value="MGI"/>
</dbReference>
<dbReference type="GO" id="GO:0042632">
    <property type="term" value="P:cholesterol homeostasis"/>
    <property type="evidence" value="ECO:0000315"/>
    <property type="project" value="MGI"/>
</dbReference>
<dbReference type="GO" id="GO:0006325">
    <property type="term" value="P:chromatin organization"/>
    <property type="evidence" value="ECO:0007669"/>
    <property type="project" value="UniProtKB-KW"/>
</dbReference>
<dbReference type="GO" id="GO:0032922">
    <property type="term" value="P:circadian regulation of gene expression"/>
    <property type="evidence" value="ECO:0000316"/>
    <property type="project" value="MGI"/>
</dbReference>
<dbReference type="GO" id="GO:0060318">
    <property type="term" value="P:definitive erythrocyte differentiation"/>
    <property type="evidence" value="ECO:0000315"/>
    <property type="project" value="MGI"/>
</dbReference>
<dbReference type="GO" id="GO:0008544">
    <property type="term" value="P:epidermis development"/>
    <property type="evidence" value="ECO:0000316"/>
    <property type="project" value="MGI"/>
</dbReference>
<dbReference type="GO" id="GO:0061436">
    <property type="term" value="P:establishment of skin barrier"/>
    <property type="evidence" value="ECO:0000316"/>
    <property type="project" value="MGI"/>
</dbReference>
<dbReference type="GO" id="GO:0010467">
    <property type="term" value="P:gene expression"/>
    <property type="evidence" value="ECO:0000316"/>
    <property type="project" value="MGI"/>
</dbReference>
<dbReference type="GO" id="GO:0001701">
    <property type="term" value="P:in utero embryonic development"/>
    <property type="evidence" value="ECO:0000316"/>
    <property type="project" value="MGI"/>
</dbReference>
<dbReference type="GO" id="GO:0045475">
    <property type="term" value="P:locomotor rhythm"/>
    <property type="evidence" value="ECO:0000315"/>
    <property type="project" value="UniProtKB"/>
</dbReference>
<dbReference type="GO" id="GO:0045892">
    <property type="term" value="P:negative regulation of DNA-templated transcription"/>
    <property type="evidence" value="ECO:0000314"/>
    <property type="project" value="MGI"/>
</dbReference>
<dbReference type="GO" id="GO:0051898">
    <property type="term" value="P:negative regulation of phosphatidylinositol 3-kinase/protein kinase B signal transduction"/>
    <property type="evidence" value="ECO:0000315"/>
    <property type="project" value="MGI"/>
</dbReference>
<dbReference type="GO" id="GO:0000122">
    <property type="term" value="P:negative regulation of transcription by RNA polymerase II"/>
    <property type="evidence" value="ECO:0000315"/>
    <property type="project" value="MGI"/>
</dbReference>
<dbReference type="GO" id="GO:0050821">
    <property type="term" value="P:protein stabilization"/>
    <property type="evidence" value="ECO:0000316"/>
    <property type="project" value="MGI"/>
</dbReference>
<dbReference type="GO" id="GO:0040014">
    <property type="term" value="P:regulation of multicellular organism growth"/>
    <property type="evidence" value="ECO:0000316"/>
    <property type="project" value="MGI"/>
</dbReference>
<dbReference type="GO" id="GO:0002155">
    <property type="term" value="P:regulation of thyroid hormone receptor signaling pathway"/>
    <property type="evidence" value="ECO:0000316"/>
    <property type="project" value="MGI"/>
</dbReference>
<dbReference type="GO" id="GO:0006357">
    <property type="term" value="P:regulation of transcription by RNA polymerase II"/>
    <property type="evidence" value="ECO:0000316"/>
    <property type="project" value="MGI"/>
</dbReference>
<dbReference type="GO" id="GO:0033077">
    <property type="term" value="P:T cell differentiation in thymus"/>
    <property type="evidence" value="ECO:0000315"/>
    <property type="project" value="MGI"/>
</dbReference>
<dbReference type="GO" id="GO:0021794">
    <property type="term" value="P:thalamus development"/>
    <property type="evidence" value="ECO:0000315"/>
    <property type="project" value="MGI"/>
</dbReference>
<dbReference type="CDD" id="cd00167">
    <property type="entry name" value="SANT"/>
    <property type="match status" value="2"/>
</dbReference>
<dbReference type="FunFam" id="1.20.58.1880:FF:000004">
    <property type="entry name" value="nuclear receptor corepressor 1 isoform X4"/>
    <property type="match status" value="1"/>
</dbReference>
<dbReference type="FunFam" id="1.10.10.60:FF:000026">
    <property type="entry name" value="Nuclear receptor corepressor 2 isoform 1"/>
    <property type="match status" value="1"/>
</dbReference>
<dbReference type="FunFam" id="1.20.5.430:FF:000001">
    <property type="entry name" value="Nuclear receptor corepressor 2 isoform 1"/>
    <property type="match status" value="1"/>
</dbReference>
<dbReference type="Gene3D" id="1.20.5.430">
    <property type="match status" value="1"/>
</dbReference>
<dbReference type="Gene3D" id="1.20.58.1880">
    <property type="match status" value="1"/>
</dbReference>
<dbReference type="Gene3D" id="1.10.10.60">
    <property type="entry name" value="Homeodomain-like"/>
    <property type="match status" value="1"/>
</dbReference>
<dbReference type="InterPro" id="IPR009057">
    <property type="entry name" value="Homeodomain-like_sf"/>
</dbReference>
<dbReference type="InterPro" id="IPR017930">
    <property type="entry name" value="Myb_dom"/>
</dbReference>
<dbReference type="InterPro" id="IPR051571">
    <property type="entry name" value="N-CoR_corepressor"/>
</dbReference>
<dbReference type="InterPro" id="IPR031557">
    <property type="entry name" value="N-CoR_GPS2_interact"/>
</dbReference>
<dbReference type="InterPro" id="IPR001005">
    <property type="entry name" value="SANT/Myb"/>
</dbReference>
<dbReference type="InterPro" id="IPR017884">
    <property type="entry name" value="SANT_dom"/>
</dbReference>
<dbReference type="PANTHER" id="PTHR13992">
    <property type="entry name" value="NUCLEAR RECEPTOR CO-REPRESSOR RELATED NCOR"/>
    <property type="match status" value="1"/>
</dbReference>
<dbReference type="PANTHER" id="PTHR13992:SF5">
    <property type="entry name" value="NUCLEAR RECEPTOR COREPRESSOR 1"/>
    <property type="match status" value="1"/>
</dbReference>
<dbReference type="Pfam" id="PF15784">
    <property type="entry name" value="GPS2_interact"/>
    <property type="match status" value="1"/>
</dbReference>
<dbReference type="Pfam" id="PF00249">
    <property type="entry name" value="Myb_DNA-binding"/>
    <property type="match status" value="1"/>
</dbReference>
<dbReference type="SMART" id="SM00717">
    <property type="entry name" value="SANT"/>
    <property type="match status" value="2"/>
</dbReference>
<dbReference type="SUPFAM" id="SSF46689">
    <property type="entry name" value="Homeodomain-like"/>
    <property type="match status" value="2"/>
</dbReference>
<dbReference type="PROSITE" id="PS51293">
    <property type="entry name" value="SANT"/>
    <property type="match status" value="2"/>
</dbReference>